<sequence>MATIFDSLISSRLDGTRFSFYNDEEIQQMSVKEIHNPMAYDELNNPTSHGICDESMGVSALDKLSKCKTCGCDSVYCPGHMGHIKLTSTCYNPFTMKLLHSLLKSKCLVCHRLRISPKRIELFEIRLKLIKLGYLVEAEKLSDFNHFSLESIDSAIRILRKKTKGKTNKKEEKEDSEEVEEDKYAAKEALENLIQKEKENREIFYSHISSILQEDTPNESIGNAITVAIRDITKEIMNSVVPSKCPHCDVCNPRIKKDGATKFFQMPLSNRDTKAMLSSHGRIDMRIDISTMGAISEYDEEDDESSGESEVREGDEEQEKKQKYLSPIEVLEHMRRLWDVEDTLLNELFDNYKIFFMNNLLVSQNRFRPESSGGKQSGDDRDYLHAHSAMLTKIINANIAFRRTIELKENLTDDRNLETESEKSKTQQIDLSKTEITSKQVIKAWAELQESVNCYLDSSLAAKLENKEKPGLRQLLERKEGIFRMKMMGKRVNFAGRSVISPDPYISTDQIGVPEFIARTITFPEPAKNIEKLKRCVINGAHKHPGANFIEYPNGERKALENMTLEEKKQSSIIRKWRKIVYRHMQTGDPLLVNRQPTLHKPSIMAHNAIILPKEQTIRMHYSNCKSYNADFDGDEMK</sequence>
<keyword id="KW-0240">DNA-directed RNA polymerase</keyword>
<keyword id="KW-0479">Metal-binding</keyword>
<keyword id="KW-0548">Nucleotidyltransferase</keyword>
<keyword id="KW-0539">Nucleus</keyword>
<keyword id="KW-0804">Transcription</keyword>
<keyword id="KW-0808">Transferase</keyword>
<keyword id="KW-0862">Zinc</keyword>
<feature type="chain" id="PRO_0000073927" description="DNA-directed RNA polymerase I subunit RPA1">
    <location>
        <begin position="1"/>
        <end position="638" status="greater than"/>
    </location>
</feature>
<feature type="region of interest" description="Disordered" evidence="1">
    <location>
        <begin position="297"/>
        <end position="321"/>
    </location>
</feature>
<feature type="compositionally biased region" description="Acidic residues" evidence="1">
    <location>
        <begin position="297"/>
        <end position="317"/>
    </location>
</feature>
<feature type="non-terminal residue">
    <location>
        <position position="638"/>
    </location>
</feature>
<proteinExistence type="inferred from homology"/>
<evidence type="ECO:0000256" key="1">
    <source>
        <dbReference type="SAM" id="MobiDB-lite"/>
    </source>
</evidence>
<evidence type="ECO:0000305" key="2"/>
<dbReference type="EC" id="2.7.7.6"/>
<dbReference type="EMBL" id="X66450">
    <property type="protein sequence ID" value="CAA47066.1"/>
    <property type="molecule type" value="Genomic_DNA"/>
</dbReference>
<dbReference type="PIR" id="S33884">
    <property type="entry name" value="S33884"/>
</dbReference>
<dbReference type="SMR" id="P28363"/>
<dbReference type="GO" id="GO:0005739">
    <property type="term" value="C:mitochondrion"/>
    <property type="evidence" value="ECO:0007669"/>
    <property type="project" value="GOC"/>
</dbReference>
<dbReference type="GO" id="GO:0009536">
    <property type="term" value="C:plastid"/>
    <property type="evidence" value="ECO:0007669"/>
    <property type="project" value="GOC"/>
</dbReference>
<dbReference type="GO" id="GO:0005736">
    <property type="term" value="C:RNA polymerase I complex"/>
    <property type="evidence" value="ECO:0007669"/>
    <property type="project" value="TreeGrafter"/>
</dbReference>
<dbReference type="GO" id="GO:0003677">
    <property type="term" value="F:DNA binding"/>
    <property type="evidence" value="ECO:0007669"/>
    <property type="project" value="InterPro"/>
</dbReference>
<dbReference type="GO" id="GO:0003899">
    <property type="term" value="F:DNA-directed RNA polymerase activity"/>
    <property type="evidence" value="ECO:0007669"/>
    <property type="project" value="UniProtKB-EC"/>
</dbReference>
<dbReference type="GO" id="GO:0046872">
    <property type="term" value="F:metal ion binding"/>
    <property type="evidence" value="ECO:0007669"/>
    <property type="project" value="UniProtKB-KW"/>
</dbReference>
<dbReference type="GO" id="GO:0006351">
    <property type="term" value="P:DNA-templated transcription"/>
    <property type="evidence" value="ECO:0007669"/>
    <property type="project" value="InterPro"/>
</dbReference>
<dbReference type="Gene3D" id="2.40.40.20">
    <property type="match status" value="1"/>
</dbReference>
<dbReference type="Gene3D" id="3.30.1490.180">
    <property type="entry name" value="RNA polymerase ii"/>
    <property type="match status" value="1"/>
</dbReference>
<dbReference type="Gene3D" id="4.10.860.120">
    <property type="entry name" value="RNA polymerase II, clamp domain"/>
    <property type="match status" value="1"/>
</dbReference>
<dbReference type="InterPro" id="IPR045867">
    <property type="entry name" value="DNA-dir_RpoC_beta_prime"/>
</dbReference>
<dbReference type="InterPro" id="IPR000722">
    <property type="entry name" value="RNA_pol_asu"/>
</dbReference>
<dbReference type="InterPro" id="IPR006592">
    <property type="entry name" value="RNA_pol_N"/>
</dbReference>
<dbReference type="InterPro" id="IPR007080">
    <property type="entry name" value="RNA_pol_Rpb1_1"/>
</dbReference>
<dbReference type="InterPro" id="IPR044893">
    <property type="entry name" value="RNA_pol_Rpb1_clamp_domain"/>
</dbReference>
<dbReference type="PANTHER" id="PTHR19376">
    <property type="entry name" value="DNA-DIRECTED RNA POLYMERASE"/>
    <property type="match status" value="1"/>
</dbReference>
<dbReference type="PANTHER" id="PTHR19376:SF11">
    <property type="entry name" value="DNA-DIRECTED RNA POLYMERASE I SUBUNIT RPA1"/>
    <property type="match status" value="1"/>
</dbReference>
<dbReference type="Pfam" id="PF04997">
    <property type="entry name" value="RNA_pol_Rpb1_1"/>
    <property type="match status" value="1"/>
</dbReference>
<dbReference type="Pfam" id="PF00623">
    <property type="entry name" value="RNA_pol_Rpb1_2"/>
    <property type="match status" value="1"/>
</dbReference>
<dbReference type="SMART" id="SM00663">
    <property type="entry name" value="RPOLA_N"/>
    <property type="match status" value="1"/>
</dbReference>
<dbReference type="SUPFAM" id="SSF64484">
    <property type="entry name" value="beta and beta-prime subunits of DNA dependent RNA-polymerase"/>
    <property type="match status" value="1"/>
</dbReference>
<name>RPA1_EUPOC</name>
<gene>
    <name type="primary">RPA1</name>
</gene>
<organism>
    <name type="scientific">Euplotoides octocarinatus</name>
    <name type="common">Freshwater ciliate</name>
    <name type="synonym">Euplotes octocarinatus</name>
    <dbReference type="NCBI Taxonomy" id="2716877"/>
    <lineage>
        <taxon>Eukaryota</taxon>
        <taxon>Sar</taxon>
        <taxon>Alveolata</taxon>
        <taxon>Ciliophora</taxon>
        <taxon>Intramacronucleata</taxon>
        <taxon>Spirotrichea</taxon>
        <taxon>Hypotrichia</taxon>
        <taxon>Euplotida</taxon>
        <taxon>Euplotidae</taxon>
        <taxon>Euplotes</taxon>
    </lineage>
</organism>
<reference key="1">
    <citation type="journal article" date="1992" name="Nucleic Acids Res.">
        <title>Gene dosage as a possible major determinant for equal expression levels of genes encoding RNA polymerase subunits in the hypotrichous ciliate Euplotes octocarinatus.</title>
        <authorList>
            <person name="Kaufmann J."/>
            <person name="Klein A."/>
        </authorList>
    </citation>
    <scope>NUCLEOTIDE SEQUENCE [GENOMIC DNA]</scope>
    <source>
        <strain>(68)-VIII</strain>
    </source>
</reference>
<reference key="2">
    <citation type="journal article" date="1992" name="Nucleic Acids Res.">
        <title>TGA cysteine codons and intron sequences in conserved and nonconserved positions are found in macronuclear RNA polymerase genes of Euplotes octocarinatus.</title>
        <authorList>
            <person name="Kaufmann J."/>
            <person name="Florian V."/>
            <person name="Klein A."/>
        </authorList>
    </citation>
    <scope>NUCLEOTIDE SEQUENCE [GENOMIC DNA] OF 1-94</scope>
</reference>
<accession>P28363</accession>
<comment type="function">
    <text>DNA-dependent RNA polymerase catalyzes the transcription of DNA into RNA using the four ribonucleoside triphosphates as substrates. RNA polymerase I is essentially used to transcribe ribosomal DNA units.</text>
</comment>
<comment type="catalytic activity">
    <reaction>
        <text>RNA(n) + a ribonucleoside 5'-triphosphate = RNA(n+1) + diphosphate</text>
        <dbReference type="Rhea" id="RHEA:21248"/>
        <dbReference type="Rhea" id="RHEA-COMP:14527"/>
        <dbReference type="Rhea" id="RHEA-COMP:17342"/>
        <dbReference type="ChEBI" id="CHEBI:33019"/>
        <dbReference type="ChEBI" id="CHEBI:61557"/>
        <dbReference type="ChEBI" id="CHEBI:140395"/>
        <dbReference type="EC" id="2.7.7.6"/>
    </reaction>
</comment>
<comment type="subunit">
    <text>Each class of RNA polymerase is assembled from 9 to 14 different polypeptides. This subunit is the largest component of RNA polymerase I.</text>
</comment>
<comment type="subcellular location">
    <subcellularLocation>
        <location>Nucleus</location>
    </subcellularLocation>
</comment>
<comment type="miscellaneous">
    <text>Three distinct zinc-containing RNA polymerases are found in eukaryotic nuclei: polymerase I for the ribosomal RNA precursor, polymerase II for the mRNA precursor, and polymerase III for 5S and tRNA genes.</text>
</comment>
<comment type="similarity">
    <text evidence="2">Belongs to the RNA polymerase beta' chain family.</text>
</comment>
<protein>
    <recommendedName>
        <fullName>DNA-directed RNA polymerase I subunit RPA1</fullName>
        <ecNumber>2.7.7.6</ecNumber>
    </recommendedName>
    <alternativeName>
        <fullName>DNA-directed RNA polymerase I largest subunit</fullName>
    </alternativeName>
</protein>